<feature type="chain" id="PRO_0000115007" description="Uncharacterized transcriptional regulatory protein C1F7.11c">
    <location>
        <begin position="1"/>
        <end position="782"/>
    </location>
</feature>
<feature type="DNA-binding region" description="Zn(2)-C6 fungal-type" evidence="1">
    <location>
        <begin position="22"/>
        <end position="50"/>
    </location>
</feature>
<feature type="region of interest" description="Disordered" evidence="2">
    <location>
        <begin position="105"/>
        <end position="126"/>
    </location>
</feature>
<feature type="region of interest" description="Disordered" evidence="2">
    <location>
        <begin position="645"/>
        <end position="665"/>
    </location>
</feature>
<feature type="compositionally biased region" description="Basic and acidic residues" evidence="2">
    <location>
        <begin position="654"/>
        <end position="665"/>
    </location>
</feature>
<protein>
    <recommendedName>
        <fullName>Uncharacterized transcriptional regulatory protein C1F7.11c</fullName>
    </recommendedName>
</protein>
<gene>
    <name type="ORF">SPAC1F7.11c</name>
</gene>
<name>YAKB_SCHPO</name>
<organism>
    <name type="scientific">Schizosaccharomyces pombe (strain 972 / ATCC 24843)</name>
    <name type="common">Fission yeast</name>
    <dbReference type="NCBI Taxonomy" id="284812"/>
    <lineage>
        <taxon>Eukaryota</taxon>
        <taxon>Fungi</taxon>
        <taxon>Dikarya</taxon>
        <taxon>Ascomycota</taxon>
        <taxon>Taphrinomycotina</taxon>
        <taxon>Schizosaccharomycetes</taxon>
        <taxon>Schizosaccharomycetales</taxon>
        <taxon>Schizosaccharomycetaceae</taxon>
        <taxon>Schizosaccharomyces</taxon>
    </lineage>
</organism>
<proteinExistence type="predicted"/>
<sequence>MSASGKKPGTKGTKRHRKITSCRECHRLKLKCDRVWPCENCKKRGIPNLCPNGILVSVSDKLIKLLLSRIDTLQNCVKSVSPNHESLIVSSDDQKIIDDIYEKFGEKPAEDTKDENRSQPIHDPDHPTLEDVAQMLGKLKVGSHGYFNYYGASSSRSCIPQQDPNSEEEDTFMQRPFLYPASSYNSALHWSHRIPNILNPSTLCDMLPVPQFAVRLMGLYFDNVGWSSHIIHRPSFEEACLNLYSAAPDRTNPQPQFLSLTYMVFCLGTLFTSPVLVRNRYSLAHEFFLRAQLCFDISVSGFTPSLDSVVAVMLMAQYSYFCDRLERTNFAWNCIGLAIRLAVAMGLHRDGEVFELSAFQLHMRRLIWSELLFFDRMLSMSLGRPFAISNDQTNVHEPSNVCDIQISSQSNCIPDPSYERTEASFTIFKAKLSKVIASVLDRAFRFTPPSYSEVEALTEQFKVLENELPDYMRISRDTPNLPPMVIIEQYSAKFLIQQALLYLHRPWFVRAATRKEEREHYKSSFNLCTSVSHELIHNLYSLMCLVPVEPLRWWVFRFHSLNAGIIQAAYALCFPNTDYALTAYNDLQYICRIFEHLKGGFMFSNKDYDFLIQLKSKVFNRFQLSSQGLTPEDLTEDVPFLHFNVPSSRPNSKSPDDSSMRAEKAAQLDGLGLSSDDLNTAQSENLPIYEQENPLLFDSLSWHVPKDDTRNDKSPLVPTWNADMMFEEEQKPIVPIDLSSMQDDQVSSLTTNEEFDPLSSFQASHSGSNFWTNMMNEMGIPK</sequence>
<keyword id="KW-0238">DNA-binding</keyword>
<keyword id="KW-0479">Metal-binding</keyword>
<keyword id="KW-0539">Nucleus</keyword>
<keyword id="KW-1185">Reference proteome</keyword>
<keyword id="KW-0804">Transcription</keyword>
<keyword id="KW-0805">Transcription regulation</keyword>
<keyword id="KW-0862">Zinc</keyword>
<evidence type="ECO:0000255" key="1">
    <source>
        <dbReference type="PROSITE-ProRule" id="PRU00227"/>
    </source>
</evidence>
<evidence type="ECO:0000256" key="2">
    <source>
        <dbReference type="SAM" id="MobiDB-lite"/>
    </source>
</evidence>
<evidence type="ECO:0000305" key="3"/>
<accession>Q09922</accession>
<reference key="1">
    <citation type="journal article" date="2002" name="Nature">
        <title>The genome sequence of Schizosaccharomyces pombe.</title>
        <authorList>
            <person name="Wood V."/>
            <person name="Gwilliam R."/>
            <person name="Rajandream M.A."/>
            <person name="Lyne M.H."/>
            <person name="Lyne R."/>
            <person name="Stewart A."/>
            <person name="Sgouros J.G."/>
            <person name="Peat N."/>
            <person name="Hayles J."/>
            <person name="Baker S.G."/>
            <person name="Basham D."/>
            <person name="Bowman S."/>
            <person name="Brooks K."/>
            <person name="Brown D."/>
            <person name="Brown S."/>
            <person name="Chillingworth T."/>
            <person name="Churcher C.M."/>
            <person name="Collins M."/>
            <person name="Connor R."/>
            <person name="Cronin A."/>
            <person name="Davis P."/>
            <person name="Feltwell T."/>
            <person name="Fraser A."/>
            <person name="Gentles S."/>
            <person name="Goble A."/>
            <person name="Hamlin N."/>
            <person name="Harris D.E."/>
            <person name="Hidalgo J."/>
            <person name="Hodgson G."/>
            <person name="Holroyd S."/>
            <person name="Hornsby T."/>
            <person name="Howarth S."/>
            <person name="Huckle E.J."/>
            <person name="Hunt S."/>
            <person name="Jagels K."/>
            <person name="James K.D."/>
            <person name="Jones L."/>
            <person name="Jones M."/>
            <person name="Leather S."/>
            <person name="McDonald S."/>
            <person name="McLean J."/>
            <person name="Mooney P."/>
            <person name="Moule S."/>
            <person name="Mungall K.L."/>
            <person name="Murphy L.D."/>
            <person name="Niblett D."/>
            <person name="Odell C."/>
            <person name="Oliver K."/>
            <person name="O'Neil S."/>
            <person name="Pearson D."/>
            <person name="Quail M.A."/>
            <person name="Rabbinowitsch E."/>
            <person name="Rutherford K.M."/>
            <person name="Rutter S."/>
            <person name="Saunders D."/>
            <person name="Seeger K."/>
            <person name="Sharp S."/>
            <person name="Skelton J."/>
            <person name="Simmonds M.N."/>
            <person name="Squares R."/>
            <person name="Squares S."/>
            <person name="Stevens K."/>
            <person name="Taylor K."/>
            <person name="Taylor R.G."/>
            <person name="Tivey A."/>
            <person name="Walsh S.V."/>
            <person name="Warren T."/>
            <person name="Whitehead S."/>
            <person name="Woodward J.R."/>
            <person name="Volckaert G."/>
            <person name="Aert R."/>
            <person name="Robben J."/>
            <person name="Grymonprez B."/>
            <person name="Weltjens I."/>
            <person name="Vanstreels E."/>
            <person name="Rieger M."/>
            <person name="Schaefer M."/>
            <person name="Mueller-Auer S."/>
            <person name="Gabel C."/>
            <person name="Fuchs M."/>
            <person name="Duesterhoeft A."/>
            <person name="Fritzc C."/>
            <person name="Holzer E."/>
            <person name="Moestl D."/>
            <person name="Hilbert H."/>
            <person name="Borzym K."/>
            <person name="Langer I."/>
            <person name="Beck A."/>
            <person name="Lehrach H."/>
            <person name="Reinhardt R."/>
            <person name="Pohl T.M."/>
            <person name="Eger P."/>
            <person name="Zimmermann W."/>
            <person name="Wedler H."/>
            <person name="Wambutt R."/>
            <person name="Purnelle B."/>
            <person name="Goffeau A."/>
            <person name="Cadieu E."/>
            <person name="Dreano S."/>
            <person name="Gloux S."/>
            <person name="Lelaure V."/>
            <person name="Mottier S."/>
            <person name="Galibert F."/>
            <person name="Aves S.J."/>
            <person name="Xiang Z."/>
            <person name="Hunt C."/>
            <person name="Moore K."/>
            <person name="Hurst S.M."/>
            <person name="Lucas M."/>
            <person name="Rochet M."/>
            <person name="Gaillardin C."/>
            <person name="Tallada V.A."/>
            <person name="Garzon A."/>
            <person name="Thode G."/>
            <person name="Daga R.R."/>
            <person name="Cruzado L."/>
            <person name="Jimenez J."/>
            <person name="Sanchez M."/>
            <person name="del Rey F."/>
            <person name="Benito J."/>
            <person name="Dominguez A."/>
            <person name="Revuelta J.L."/>
            <person name="Moreno S."/>
            <person name="Armstrong J."/>
            <person name="Forsburg S.L."/>
            <person name="Cerutti L."/>
            <person name="Lowe T."/>
            <person name="McCombie W.R."/>
            <person name="Paulsen I."/>
            <person name="Potashkin J."/>
            <person name="Shpakovski G.V."/>
            <person name="Ussery D."/>
            <person name="Barrell B.G."/>
            <person name="Nurse P."/>
        </authorList>
    </citation>
    <scope>NUCLEOTIDE SEQUENCE [LARGE SCALE GENOMIC DNA]</scope>
    <source>
        <strain>972 / ATCC 24843</strain>
    </source>
</reference>
<dbReference type="EMBL" id="CU329670">
    <property type="protein sequence ID" value="CAA91958.1"/>
    <property type="molecule type" value="Genomic_DNA"/>
</dbReference>
<dbReference type="PIR" id="S62583">
    <property type="entry name" value="S62583"/>
</dbReference>
<dbReference type="RefSeq" id="NP_594497.1">
    <property type="nucleotide sequence ID" value="NM_001019926.2"/>
</dbReference>
<dbReference type="SMR" id="Q09922"/>
<dbReference type="BioGRID" id="278041">
    <property type="interactions" value="11"/>
</dbReference>
<dbReference type="STRING" id="284812.Q09922"/>
<dbReference type="iPTMnet" id="Q09922"/>
<dbReference type="PaxDb" id="4896-SPAC1F7.11c.1"/>
<dbReference type="EnsemblFungi" id="SPAC1F7.11c.1">
    <property type="protein sequence ID" value="SPAC1F7.11c.1:pep"/>
    <property type="gene ID" value="SPAC1F7.11c"/>
</dbReference>
<dbReference type="KEGG" id="spo:2541541"/>
<dbReference type="PomBase" id="SPAC1F7.11c"/>
<dbReference type="VEuPathDB" id="FungiDB:SPAC1F7.11c"/>
<dbReference type="eggNOG" id="ENOG502QSY9">
    <property type="taxonomic scope" value="Eukaryota"/>
</dbReference>
<dbReference type="HOGENOM" id="CLU_359479_0_0_1"/>
<dbReference type="InParanoid" id="Q09922"/>
<dbReference type="OMA" id="LRWWVFR"/>
<dbReference type="PhylomeDB" id="Q09922"/>
<dbReference type="PRO" id="PR:Q09922"/>
<dbReference type="Proteomes" id="UP000002485">
    <property type="component" value="Chromosome I"/>
</dbReference>
<dbReference type="GO" id="GO:0005829">
    <property type="term" value="C:cytosol"/>
    <property type="evidence" value="ECO:0007005"/>
    <property type="project" value="PomBase"/>
</dbReference>
<dbReference type="GO" id="GO:0005634">
    <property type="term" value="C:nucleus"/>
    <property type="evidence" value="ECO:0000255"/>
    <property type="project" value="PomBase"/>
</dbReference>
<dbReference type="GO" id="GO:0000981">
    <property type="term" value="F:DNA-binding transcription factor activity, RNA polymerase II-specific"/>
    <property type="evidence" value="ECO:0000255"/>
    <property type="project" value="PomBase"/>
</dbReference>
<dbReference type="GO" id="GO:0000978">
    <property type="term" value="F:RNA polymerase II cis-regulatory region sequence-specific DNA binding"/>
    <property type="evidence" value="ECO:0000255"/>
    <property type="project" value="PomBase"/>
</dbReference>
<dbReference type="GO" id="GO:0008270">
    <property type="term" value="F:zinc ion binding"/>
    <property type="evidence" value="ECO:0000255"/>
    <property type="project" value="PomBase"/>
</dbReference>
<dbReference type="GO" id="GO:0006351">
    <property type="term" value="P:DNA-templated transcription"/>
    <property type="evidence" value="ECO:0007669"/>
    <property type="project" value="InterPro"/>
</dbReference>
<dbReference type="GO" id="GO:0006357">
    <property type="term" value="P:regulation of transcription by RNA polymerase II"/>
    <property type="evidence" value="ECO:0000255"/>
    <property type="project" value="PomBase"/>
</dbReference>
<dbReference type="CDD" id="cd12148">
    <property type="entry name" value="fungal_TF_MHR"/>
    <property type="match status" value="1"/>
</dbReference>
<dbReference type="CDD" id="cd00067">
    <property type="entry name" value="GAL4"/>
    <property type="match status" value="1"/>
</dbReference>
<dbReference type="Gene3D" id="4.10.240.10">
    <property type="entry name" value="Zn(2)-C6 fungal-type DNA-binding domain"/>
    <property type="match status" value="1"/>
</dbReference>
<dbReference type="InterPro" id="IPR050613">
    <property type="entry name" value="Sec_Metabolite_Reg"/>
</dbReference>
<dbReference type="InterPro" id="IPR007219">
    <property type="entry name" value="Transcription_factor_dom_fun"/>
</dbReference>
<dbReference type="InterPro" id="IPR036864">
    <property type="entry name" value="Zn2-C6_fun-type_DNA-bd_sf"/>
</dbReference>
<dbReference type="InterPro" id="IPR001138">
    <property type="entry name" value="Zn2Cys6_DnaBD"/>
</dbReference>
<dbReference type="PANTHER" id="PTHR31001">
    <property type="entry name" value="UNCHARACTERIZED TRANSCRIPTIONAL REGULATORY PROTEIN"/>
    <property type="match status" value="1"/>
</dbReference>
<dbReference type="PANTHER" id="PTHR31001:SF56">
    <property type="entry name" value="ZN(2)-C6 FUNGAL-TYPE DOMAIN-CONTAINING PROTEIN"/>
    <property type="match status" value="1"/>
</dbReference>
<dbReference type="Pfam" id="PF04082">
    <property type="entry name" value="Fungal_trans"/>
    <property type="match status" value="1"/>
</dbReference>
<dbReference type="SMART" id="SM00906">
    <property type="entry name" value="Fungal_trans"/>
    <property type="match status" value="1"/>
</dbReference>
<dbReference type="SMART" id="SM00066">
    <property type="entry name" value="GAL4"/>
    <property type="match status" value="1"/>
</dbReference>
<dbReference type="SUPFAM" id="SSF57701">
    <property type="entry name" value="Zn2/Cys6 DNA-binding domain"/>
    <property type="match status" value="1"/>
</dbReference>
<dbReference type="PROSITE" id="PS00463">
    <property type="entry name" value="ZN2_CY6_FUNGAL_1"/>
    <property type="match status" value="1"/>
</dbReference>
<dbReference type="PROSITE" id="PS50048">
    <property type="entry name" value="ZN2_CY6_FUNGAL_2"/>
    <property type="match status" value="1"/>
</dbReference>
<comment type="subcellular location">
    <subcellularLocation>
        <location evidence="3">Nucleus</location>
    </subcellularLocation>
</comment>